<keyword id="KW-0227">DNA damage</keyword>
<keyword id="KW-0233">DNA recombination</keyword>
<keyword id="KW-0234">DNA repair</keyword>
<keyword id="KW-1185">Reference proteome</keyword>
<reference key="1">
    <citation type="journal article" date="2008" name="J. Bacteriol.">
        <title>Complete genome sequence of uropathogenic Proteus mirabilis, a master of both adherence and motility.</title>
        <authorList>
            <person name="Pearson M.M."/>
            <person name="Sebaihia M."/>
            <person name="Churcher C."/>
            <person name="Quail M.A."/>
            <person name="Seshasayee A.S."/>
            <person name="Luscombe N.M."/>
            <person name="Abdellah Z."/>
            <person name="Arrosmith C."/>
            <person name="Atkin B."/>
            <person name="Chillingworth T."/>
            <person name="Hauser H."/>
            <person name="Jagels K."/>
            <person name="Moule S."/>
            <person name="Mungall K."/>
            <person name="Norbertczak H."/>
            <person name="Rabbinowitsch E."/>
            <person name="Walker D."/>
            <person name="Whithead S."/>
            <person name="Thomson N.R."/>
            <person name="Rather P.N."/>
            <person name="Parkhill J."/>
            <person name="Mobley H.L.T."/>
        </authorList>
    </citation>
    <scope>NUCLEOTIDE SEQUENCE [LARGE SCALE GENOMIC DNA]</scope>
    <source>
        <strain>HI4320</strain>
    </source>
</reference>
<gene>
    <name evidence="1" type="primary">recO</name>
    <name type="ordered locus">PMI1886</name>
</gene>
<dbReference type="EMBL" id="AM942759">
    <property type="protein sequence ID" value="CAR43909.1"/>
    <property type="molecule type" value="Genomic_DNA"/>
</dbReference>
<dbReference type="RefSeq" id="WP_004248456.1">
    <property type="nucleotide sequence ID" value="NC_010554.1"/>
</dbReference>
<dbReference type="SMR" id="B4F045"/>
<dbReference type="EnsemblBacteria" id="CAR43909">
    <property type="protein sequence ID" value="CAR43909"/>
    <property type="gene ID" value="PMI1886"/>
</dbReference>
<dbReference type="GeneID" id="6800610"/>
<dbReference type="KEGG" id="pmr:PMI1886"/>
<dbReference type="PATRIC" id="fig|529507.6.peg.1839"/>
<dbReference type="eggNOG" id="COG1381">
    <property type="taxonomic scope" value="Bacteria"/>
</dbReference>
<dbReference type="HOGENOM" id="CLU_066645_1_0_6"/>
<dbReference type="Proteomes" id="UP000008319">
    <property type="component" value="Chromosome"/>
</dbReference>
<dbReference type="GO" id="GO:0043590">
    <property type="term" value="C:bacterial nucleoid"/>
    <property type="evidence" value="ECO:0007669"/>
    <property type="project" value="TreeGrafter"/>
</dbReference>
<dbReference type="GO" id="GO:0006310">
    <property type="term" value="P:DNA recombination"/>
    <property type="evidence" value="ECO:0007669"/>
    <property type="project" value="UniProtKB-UniRule"/>
</dbReference>
<dbReference type="GO" id="GO:0006302">
    <property type="term" value="P:double-strand break repair"/>
    <property type="evidence" value="ECO:0007669"/>
    <property type="project" value="TreeGrafter"/>
</dbReference>
<dbReference type="Gene3D" id="2.40.50.140">
    <property type="entry name" value="Nucleic acid-binding proteins"/>
    <property type="match status" value="1"/>
</dbReference>
<dbReference type="Gene3D" id="1.20.1440.120">
    <property type="entry name" value="Recombination protein O, C-terminal domain"/>
    <property type="match status" value="1"/>
</dbReference>
<dbReference type="HAMAP" id="MF_00201">
    <property type="entry name" value="RecO"/>
    <property type="match status" value="1"/>
</dbReference>
<dbReference type="InterPro" id="IPR037278">
    <property type="entry name" value="ARFGAP/RecO"/>
</dbReference>
<dbReference type="InterPro" id="IPR022572">
    <property type="entry name" value="DNA_rep/recomb_RecO_N"/>
</dbReference>
<dbReference type="InterPro" id="IPR012340">
    <property type="entry name" value="NA-bd_OB-fold"/>
</dbReference>
<dbReference type="InterPro" id="IPR003717">
    <property type="entry name" value="RecO"/>
</dbReference>
<dbReference type="InterPro" id="IPR042242">
    <property type="entry name" value="RecO_C"/>
</dbReference>
<dbReference type="NCBIfam" id="TIGR00613">
    <property type="entry name" value="reco"/>
    <property type="match status" value="1"/>
</dbReference>
<dbReference type="PANTHER" id="PTHR33991">
    <property type="entry name" value="DNA REPAIR PROTEIN RECO"/>
    <property type="match status" value="1"/>
</dbReference>
<dbReference type="PANTHER" id="PTHR33991:SF1">
    <property type="entry name" value="DNA REPAIR PROTEIN RECO"/>
    <property type="match status" value="1"/>
</dbReference>
<dbReference type="Pfam" id="PF02565">
    <property type="entry name" value="RecO_C"/>
    <property type="match status" value="1"/>
</dbReference>
<dbReference type="Pfam" id="PF11967">
    <property type="entry name" value="RecO_N"/>
    <property type="match status" value="1"/>
</dbReference>
<dbReference type="SUPFAM" id="SSF57863">
    <property type="entry name" value="ArfGap/RecO-like zinc finger"/>
    <property type="match status" value="1"/>
</dbReference>
<dbReference type="SUPFAM" id="SSF50249">
    <property type="entry name" value="Nucleic acid-binding proteins"/>
    <property type="match status" value="1"/>
</dbReference>
<sequence length="246" mass="27670">MEGWQRAFVIHARPYSETSLLLDFFTENEGRVRILSKGARGRRSPLKGALQPFTPLLIRWSGRGEIKTLRDAEPISLALPLTGTVLYSGLYLNELLSRVLENGTSYSTLFFEYLSCLQILAASETTPEAALRRFELALLTQLGYGLDFLHCAGSGEPVSDTMTYRYREEKGFIASLVVDHYSFTGLELKSLAKREFPTAGTLKAAKRFTRMALKPYLGGKPLKSRELFRQFAIKKCAKKSVLIEDK</sequence>
<feature type="chain" id="PRO_1000099398" description="DNA repair protein RecO">
    <location>
        <begin position="1"/>
        <end position="246"/>
    </location>
</feature>
<proteinExistence type="inferred from homology"/>
<evidence type="ECO:0000255" key="1">
    <source>
        <dbReference type="HAMAP-Rule" id="MF_00201"/>
    </source>
</evidence>
<name>RECO_PROMH</name>
<accession>B4F045</accession>
<comment type="function">
    <text evidence="1">Involved in DNA repair and RecF pathway recombination.</text>
</comment>
<comment type="similarity">
    <text evidence="1">Belongs to the RecO family.</text>
</comment>
<protein>
    <recommendedName>
        <fullName evidence="1">DNA repair protein RecO</fullName>
    </recommendedName>
    <alternativeName>
        <fullName evidence="1">Recombination protein O</fullName>
    </alternativeName>
</protein>
<organism>
    <name type="scientific">Proteus mirabilis (strain HI4320)</name>
    <dbReference type="NCBI Taxonomy" id="529507"/>
    <lineage>
        <taxon>Bacteria</taxon>
        <taxon>Pseudomonadati</taxon>
        <taxon>Pseudomonadota</taxon>
        <taxon>Gammaproteobacteria</taxon>
        <taxon>Enterobacterales</taxon>
        <taxon>Morganellaceae</taxon>
        <taxon>Proteus</taxon>
    </lineage>
</organism>